<organism>
    <name type="scientific">Mus musculus</name>
    <name type="common">Mouse</name>
    <dbReference type="NCBI Taxonomy" id="10090"/>
    <lineage>
        <taxon>Eukaryota</taxon>
        <taxon>Metazoa</taxon>
        <taxon>Chordata</taxon>
        <taxon>Craniata</taxon>
        <taxon>Vertebrata</taxon>
        <taxon>Euteleostomi</taxon>
        <taxon>Mammalia</taxon>
        <taxon>Eutheria</taxon>
        <taxon>Euarchontoglires</taxon>
        <taxon>Glires</taxon>
        <taxon>Rodentia</taxon>
        <taxon>Myomorpha</taxon>
        <taxon>Muroidea</taxon>
        <taxon>Muridae</taxon>
        <taxon>Murinae</taxon>
        <taxon>Mus</taxon>
        <taxon>Mus</taxon>
    </lineage>
</organism>
<feature type="chain" id="PRO_0000047095" description="DNA-binding protein Ikaros">
    <location>
        <begin position="1"/>
        <end position="517"/>
    </location>
</feature>
<feature type="zinc finger region" description="C2H2-type 1" evidence="3">
    <location>
        <begin position="117"/>
        <end position="139"/>
    </location>
</feature>
<feature type="zinc finger region" description="C2H2-type 2" evidence="3">
    <location>
        <begin position="144"/>
        <end position="166"/>
    </location>
</feature>
<feature type="zinc finger region" description="C2H2-type 3" evidence="3">
    <location>
        <begin position="172"/>
        <end position="194"/>
    </location>
</feature>
<feature type="zinc finger region" description="C2H2-type 4" evidence="3">
    <location>
        <begin position="200"/>
        <end position="223"/>
    </location>
</feature>
<feature type="zinc finger region" description="C2H2-type 5" evidence="3">
    <location>
        <begin position="457"/>
        <end position="479"/>
    </location>
</feature>
<feature type="zinc finger region" description="C2H2-type 6" evidence="3">
    <location>
        <begin position="488"/>
        <end position="512"/>
    </location>
</feature>
<feature type="region of interest" description="Disordered" evidence="4">
    <location>
        <begin position="1"/>
        <end position="71"/>
    </location>
</feature>
<feature type="region of interest" description="Required for both high-affinity DNA binding and pericentromeric heterochromatin localization">
    <location>
        <begin position="153"/>
        <end position="162"/>
    </location>
</feature>
<feature type="region of interest" description="Required for both high-affinity DNA binding and pericentromeric heterochromatin localization">
    <location>
        <begin position="179"/>
        <end position="194"/>
    </location>
</feature>
<feature type="region of interest" description="Disordered" evidence="4">
    <location>
        <begin position="376"/>
        <end position="400"/>
    </location>
</feature>
<feature type="region of interest" description="Required for binding PP1CC">
    <location>
        <begin position="463"/>
        <end position="466"/>
    </location>
</feature>
<feature type="compositionally biased region" description="Polar residues" evidence="4">
    <location>
        <begin position="37"/>
        <end position="47"/>
    </location>
</feature>
<feature type="site" description="Required for both pericentromeric heterochromatin localization and complete DNA binding">
    <location>
        <position position="158"/>
    </location>
</feature>
<feature type="site" description="Required for both pericentromeric heterochromatin localization and complete DNA binding">
    <location>
        <position position="161"/>
    </location>
</feature>
<feature type="site" description="Required for both pericentromeric heterochromatin localization and DNA binding">
    <location>
        <position position="187"/>
    </location>
</feature>
<feature type="modified residue" description="Phosphoserine" evidence="13">
    <location>
        <position position="13"/>
    </location>
</feature>
<feature type="modified residue" description="Phosphothreonine" evidence="13">
    <location>
        <position position="23"/>
    </location>
</feature>
<feature type="modified residue" description="Phosphoserine" evidence="10 13 20">
    <location>
        <position position="63"/>
    </location>
</feature>
<feature type="modified residue" description="Phosphoserine" evidence="13">
    <location>
        <position position="101"/>
    </location>
</feature>
<feature type="modified residue" description="Phosphothreonine" evidence="8">
    <location>
        <position position="140"/>
    </location>
</feature>
<feature type="modified residue" description="Phosphoserine" evidence="8">
    <location>
        <position position="167"/>
    </location>
</feature>
<feature type="modified residue" description="Phosphoserine" evidence="8">
    <location>
        <position position="195"/>
    </location>
</feature>
<feature type="modified residue" description="Phosphoserine" evidence="2">
    <location>
        <position position="259"/>
    </location>
</feature>
<feature type="modified residue" description="Phosphoserine" evidence="2">
    <location>
        <position position="287"/>
    </location>
</feature>
<feature type="modified residue" description="Phosphoserine" evidence="13">
    <location>
        <position position="293"/>
    </location>
</feature>
<feature type="modified residue" description="Phosphoserine" evidence="2">
    <location>
        <position position="357"/>
    </location>
</feature>
<feature type="modified residue" description="Phosphoserine" evidence="2">
    <location>
        <position position="360"/>
    </location>
</feature>
<feature type="modified residue" description="Phosphoserine" evidence="10">
    <location>
        <position position="384"/>
    </location>
</feature>
<feature type="modified residue" description="Phosphoserine" evidence="10">
    <location>
        <position position="386"/>
    </location>
</feature>
<feature type="modified residue" description="Phosphoserine" evidence="10">
    <location>
        <position position="388"/>
    </location>
</feature>
<feature type="modified residue" description="Phosphoserine" evidence="10">
    <location>
        <position position="392"/>
    </location>
</feature>
<feature type="modified residue" description="Phosphothreonine" evidence="10">
    <location>
        <position position="393"/>
    </location>
</feature>
<feature type="modified residue" description="Phosphoserine" evidence="20">
    <location>
        <position position="397"/>
    </location>
</feature>
<feature type="modified residue" description="Phosphoserine" evidence="20">
    <location>
        <position position="440"/>
    </location>
</feature>
<feature type="cross-link" description="Glycyl lysine isopeptide (Lys-Gly) (interchain with G-Cter in SUMO)" evidence="11">
    <location>
        <position position="58"/>
    </location>
</feature>
<feature type="cross-link" description="Glycyl lysine isopeptide (Lys-Gly) (interchain with G-Cter in SUMO)" evidence="11">
    <location>
        <position position="239"/>
    </location>
</feature>
<feature type="splice variant" id="VSP_006853" description="In isoform II and isoform IV." evidence="19">
    <original>M</original>
    <variation>VAYGADGFRDFHAIISDRGM</variation>
    <location>
        <position position="53"/>
    </location>
</feature>
<feature type="splice variant" id="VSP_006855" description="In isoform I and isoform II." evidence="19">
    <location>
        <begin position="54"/>
        <end position="282"/>
    </location>
</feature>
<feature type="splice variant" id="VSP_006854" description="In isoform V." evidence="18">
    <location>
        <begin position="54"/>
        <end position="140"/>
    </location>
</feature>
<feature type="splice variant" id="VSP_006856" description="In isoform III and isoform IV." evidence="19">
    <location>
        <begin position="141"/>
        <end position="282"/>
    </location>
</feature>
<feature type="mutagenesis site" description="Abolishes phosphorylation. No change in binding to gamma satellites A and B. No change in pericentromeric location. Increased DNA binding affinity toward TDT." evidence="13">
    <original>S</original>
    <variation>A</variation>
    <location>
        <position position="13"/>
    </location>
</feature>
<feature type="mutagenesis site" description="Decreased binding to gamma satellite A by 5-fold and to gamma satellite B by 3-fold. Diffuse nuclear location." evidence="13">
    <original>S</original>
    <variation>D</variation>
    <location>
        <position position="13"/>
    </location>
</feature>
<feature type="mutagenesis site" description="Abolishes phosphorylation. No change in binding to gamma satellites A and B. No change in pericentromeric location." evidence="13">
    <original>T</original>
    <variation>A</variation>
    <location>
        <position position="23"/>
    </location>
</feature>
<feature type="mutagenesis site" description="Decreased binding to gamma satellites A and B by 3-fold. Little change in pericentromeric location." evidence="13">
    <original>T</original>
    <variation>D</variation>
    <location>
        <position position="23"/>
    </location>
</feature>
<feature type="mutagenesis site" description="Some loss of sumoylation. Complete loss of sumoylation, increased repressor activity but no change in pericentromeric heterochromatin location; when associated with R-240 and R-459." evidence="11">
    <original>K</original>
    <variation>R</variation>
    <location>
        <position position="58"/>
    </location>
</feature>
<feature type="mutagenesis site" description="No change in pericentromeric location. Greatly reduced phosphorylation; when associated with A-384; A-386; A-388; A392 and A-393. No effect on DNA-binding activity. Increased DNA-binding activity; when associated with A-384; A-386; A-388; A-392 and A-393." evidence="10 13">
    <original>S</original>
    <variation>A</variation>
    <location>
        <position position="63"/>
    </location>
</feature>
<feature type="mutagenesis site" description="No change in binding to gamma satellites A and B. No change in pericentromeric location." evidence="10 13">
    <original>S</original>
    <variation>D</variation>
    <location>
        <position position="63"/>
    </location>
</feature>
<feature type="mutagenesis site" description="Abolishes phosphorylation. No change in pericentromeric location." evidence="13">
    <original>S</original>
    <variation>A</variation>
    <location>
        <position position="101"/>
    </location>
</feature>
<feature type="mutagenesis site" description="No change in binding to gamma satellites A and B. No change in pericentromeric location." evidence="13">
    <original>S</original>
    <variation>D</variation>
    <location>
        <position position="101"/>
    </location>
</feature>
<feature type="mutagenesis site" description="Abolishes phosphorylation, DNA binding and pericentromeric location. Loss of DNA binding and pericentromeric location; when associated with A-167 and A-195." evidence="8">
    <original>T</original>
    <variation>A</variation>
    <location>
        <position position="140"/>
    </location>
</feature>
<feature type="mutagenesis site" description="Abolishes phosphorylation, DNA binding and pericentromeric location. Loss of DNA binding and pericentromeric location; when associated with E-167 and D-195." evidence="8">
    <original>T</original>
    <variation>E</variation>
    <location>
        <position position="140"/>
    </location>
</feature>
<feature type="mutagenesis site" description="No effect on pericentromeric heterochromatin location. No change in DNA binding." evidence="6">
    <original>S</original>
    <variation>A</variation>
    <location>
        <position position="152"/>
    </location>
</feature>
<feature type="mutagenesis site" description="Disrupts pericentromeric heterochromatin location. Partial cytoplasmic location. Abolishes DNA binding." evidence="6">
    <original>F</original>
    <variation>A</variation>
    <location>
        <position position="153"/>
    </location>
</feature>
<feature type="mutagenesis site" description="No effect on pericentromeric heterochromatin location. No change in DNA binding." evidence="6">
    <original>T</original>
    <variation>A</variation>
    <location>
        <position position="154"/>
    </location>
</feature>
<feature type="mutagenesis site" description="Loss of pericentromeric heterochromatin location. Disrupted DNA binding." evidence="6">
    <original>Q</original>
    <variation>A</variation>
    <location>
        <position position="155"/>
    </location>
</feature>
<feature type="mutagenesis site" description="Disrupts pericentromeric heterochromatin location. Partial cytoplasmic location." evidence="6">
    <original>K</original>
    <variation>A</variation>
    <location>
        <position position="156"/>
    </location>
</feature>
<feature type="mutagenesis site" description="Loss of pericentromeric heterochromatin location. Disrupted DNA binding." evidence="6">
    <original>G</original>
    <variation>A</variation>
    <location>
        <position position="157"/>
    </location>
</feature>
<feature type="mutagenesis site" description="Loss of pericentromeric heterochromatin location. Abolishes DNA binding." evidence="6">
    <original>N</original>
    <variation>A</variation>
    <location>
        <position position="158"/>
    </location>
</feature>
<feature type="mutagenesis site" description="No effect on pericentromeric heterochromatin location. No change in DNA binding." evidence="6">
    <original>L</original>
    <variation>A</variation>
    <location>
        <position position="159"/>
    </location>
</feature>
<feature type="mutagenesis site" description="No effect on pericentromeric heterochromatin location. No change in DNA binding." evidence="6">
    <original>L</original>
    <variation>A</variation>
    <location>
        <position position="160"/>
    </location>
</feature>
<feature type="mutagenesis site" description="Disrupts pericentromeric heterochromatin location. Partial cytoplasmic location. Abolishes DNA binding." evidence="6">
    <original>R</original>
    <variation>A</variation>
    <location>
        <position position="161"/>
    </location>
</feature>
<feature type="mutagenesis site" description="Abolishes phosphorylation, no effect on DNA binding nor on pericentromeric location. Loss of DNA binding and pericentromeric location; when associated with A-140 and A-195." evidence="8">
    <original>S</original>
    <variation>A</variation>
    <location>
        <position position="167"/>
    </location>
</feature>
<feature type="mutagenesis site" description="Abolishes phosphorylation, no effect on DNA binding nor on pericentromeric location. Loss of DNA binding and pericentromeric location; when associated with E-140 and D-195." evidence="8">
    <original>S</original>
    <variation>E</variation>
    <location>
        <position position="167"/>
    </location>
</feature>
<feature type="mutagenesis site" description="No effect on pericentromeric heterochromatin location. No change in DNA binding." evidence="6">
    <original>K</original>
    <variation>A</variation>
    <location>
        <position position="173"/>
    </location>
</feature>
<feature type="mutagenesis site" description="No effect on pericentromeric heterochromatin location. No change in DNA binding." evidence="6">
    <original>N</original>
    <variation>A</variation>
    <location>
        <position position="178"/>
    </location>
</feature>
<feature type="mutagenesis site" description="Loss of pericentromeric heterochromatin location. Abolishes DNA binding." evidence="6">
    <original>Y</original>
    <variation>A</variation>
    <location>
        <position position="179"/>
    </location>
</feature>
<feature type="mutagenesis site" description="Loss of pericentromeric heterochromatin location. Disrupted DNA binding." evidence="6">
    <original>A</original>
    <variation>L</variation>
    <location>
        <position position="180"/>
    </location>
</feature>
<feature type="mutagenesis site" description="No effect on pericentromeric heterochromatin location. No change in DNA binding." evidence="6">
    <original>C</original>
    <variation>A</variation>
    <location>
        <position position="181"/>
    </location>
</feature>
<feature type="mutagenesis site" description="No effect on pericentromeric heterochromatin location. No change in DNA binding." evidence="6">
    <original>R</original>
    <variation>A</variation>
    <location>
        <position position="182"/>
    </location>
</feature>
<feature type="mutagenesis site" description="Disrupts pericentromeric heterochromatin location. Partial cytoplasmic location. Abolishes DNA binding." evidence="6">
    <original>R</original>
    <variation>A</variation>
    <location>
        <position position="183"/>
    </location>
</feature>
<feature type="mutagenesis site" description="No effect on pericentromeric heterochromatin location. No change in DNA binding." evidence="6">
    <original>R</original>
    <variation>A</variation>
    <location>
        <position position="184"/>
    </location>
</feature>
<feature type="mutagenesis site" description="No effect on pericentromeric heterochromatin location. Disrupted DNA binding." evidence="6">
    <original>D</original>
    <variation>A</variation>
    <location>
        <position position="185"/>
    </location>
</feature>
<feature type="mutagenesis site" description="No effect on pericentromeric heterochromatin location. Disrupted DNA binding." evidence="6">
    <original>A</original>
    <variation>L</variation>
    <location>
        <position position="186"/>
    </location>
</feature>
<feature type="mutagenesis site" description="Loss of pericentromeric heterochromatin location. Abolishes DNA binding." evidence="6">
    <original>L</original>
    <variation>A</variation>
    <location>
        <position position="187"/>
    </location>
</feature>
<feature type="mutagenesis site" description="No effect on pericentromeric heterochromatin location. No change in DNA binding." evidence="6">
    <original>T</original>
    <variation>A</variation>
    <location>
        <position position="188"/>
    </location>
</feature>
<feature type="mutagenesis site" description="No effect on pericentromeric heterochromatin location. No change in DNA binding." evidence="6">
    <original>G</original>
    <variation>A</variation>
    <location>
        <position position="189"/>
    </location>
</feature>
<feature type="mutagenesis site" description="No effect on pericentromeric heterochromatin location. Disrupted DNA binding." evidence="6">
    <original>L</original>
    <variation>A</variation>
    <location>
        <position position="191"/>
    </location>
</feature>
<feature type="mutagenesis site" description="No effect on pericentromeric heterochromatin location. No change in DNA binding." evidence="6">
    <original>R</original>
    <variation>A</variation>
    <location>
        <position position="192"/>
    </location>
</feature>
<feature type="mutagenesis site" description="No effect on pericentromeric heterochromatin location. No change in DNA binding." evidence="6">
    <original>T</original>
    <variation>A</variation>
    <location>
        <position position="193"/>
    </location>
</feature>
<feature type="mutagenesis site" description="Abolishes phosphorylation, no effect on DNA binding nor on pericentromeric location. Loss of DNA binding and pericentromeric location; when associated with A-140 and A-167." evidence="8">
    <original>S</original>
    <variation>A</variation>
    <location>
        <position position="195"/>
    </location>
</feature>
<feature type="mutagenesis site" description="Abolishes phosphorylation, no effect on DNA binding nor on pericentromeric location. Loss of DNA binding and pericentromeric location; when associated with E-140 and E-167." evidence="8">
    <original>S</original>
    <variation>D</variation>
    <location>
        <position position="195"/>
    </location>
</feature>
<feature type="mutagenesis site" description="Some loss of sumoylation. Complete loss of sumoylation, increased repressor activity but no change in pericentromeric heterochromatin location.; when associated with R-58 and R-459." evidence="11">
    <original>K</original>
    <variation>R</variation>
    <location>
        <position position="239"/>
    </location>
</feature>
<feature type="mutagenesis site" description="Abolishes phosphorylation. No change in binding to gamma satellites A and B. No change in pericentromeric location. Increased DNA binding affinity toward TDT." evidence="13">
    <original>S</original>
    <variation>A</variation>
    <location>
        <position position="293"/>
    </location>
</feature>
<feature type="mutagenesis site" description="Decreased binding to gamma satellite A by 5-fold and to gamma satellite B by 3-fold. Diffuse nuclear location. Decreased DNA binding affinity toward TdT by 3-fold." evidence="13">
    <original>S</original>
    <variation>D</variation>
    <location>
        <position position="293"/>
    </location>
</feature>
<feature type="mutagenesis site" description="Significantly reduced phosphorylation and 2- to 3-fold increase in ability to arrest in G(1); when associated with A-386; A-388; A-392 and A-393. and A-392. Further reduction in phosphorylation; when associated with A-63; A-386; A-388; A-392 and A-393." evidence="10">
    <original>S</original>
    <variation>A</variation>
    <location>
        <position position="384"/>
    </location>
</feature>
<feature type="mutagenesis site" description="Significantly reduced phosphorylation and 2- to 3-fold increase in ability to arrest in G(1); when associated with A-384; A-388; A-392 and A-393. Further reduction in phosphorylation; when associated with A-63; A-384; A-388; A-392 and A-393." evidence="10">
    <original>S</original>
    <variation>A</variation>
    <location>
        <position position="386"/>
    </location>
</feature>
<feature type="mutagenesis site" description="Significantly reduced phosphorylation and 2- to 3-fold increase in ability to arrest in G(1); when associated with A-384; A-386; A-392 and A-393. Further reduction in phosphorylation; when associated with A-63; A-384; A-386; A-392 and A-393." evidence="10">
    <original>S</original>
    <variation>A</variation>
    <location>
        <position position="388"/>
    </location>
</feature>
<feature type="mutagenesis site" description="Significantly reduced phosphorylation and 2- to 3-fold increase in ability to arrest in G(1); when associated with A-384; A-386; A-388 and A-392. Further reduction in phosphorylation; when associated with A-63; A-384; A-386; A-386 and A-388." evidence="10">
    <original>S</original>
    <variation>A</variation>
    <location>
        <position position="392"/>
    </location>
</feature>
<feature type="mutagenesis site" description="Significantly reduced phosphorylation and 2- to 3-fold increase in ability to arrest in G(1); when associated with A-384; A-386; A-388 and A-392. Further reduction in phosphorylation; when associated with A-63; A-384; A-386; A-388 and A-392." evidence="10">
    <original>T</original>
    <variation>A</variation>
    <location>
        <position position="393"/>
    </location>
</feature>
<feature type="mutagenesis site" description="No effect on sumoylation." evidence="11">
    <original>K</original>
    <variation>R</variation>
    <location>
        <position position="424"/>
    </location>
</feature>
<feature type="mutagenesis site" description="No effect on sumoylation." evidence="11">
    <original>K</original>
    <variation>R</variation>
    <location>
        <position position="458"/>
    </location>
</feature>
<feature type="mutagenesis site" description="Abolishes binding of PP1CC, decreases DNA binding, abolishes pericentromeric location, and results in IKAROS degradation." evidence="15">
    <original>LFL</original>
    <variation>AFA</variation>
    <location>
        <begin position="465"/>
        <end position="467"/>
    </location>
</feature>
<feature type="sequence conflict" description="In Ref. 2; AAB32250." evidence="19" ref="2">
    <original>VC</original>
    <variation>MY</variation>
    <location>
        <begin position="234"/>
        <end position="235"/>
    </location>
</feature>
<feature type="sequence conflict" description="In Ref. 2; AA sequence." evidence="19" ref="2">
    <location>
        <begin position="480"/>
        <end position="482"/>
    </location>
</feature>
<accession>Q03267</accession>
<accession>Q64044</accession>
<accession>Q64045</accession>
<accession>Q64051</accession>
<protein>
    <recommendedName>
        <fullName>DNA-binding protein Ikaros</fullName>
    </recommendedName>
    <alternativeName>
        <fullName>Ikaros family zinc finger protein 1</fullName>
    </alternativeName>
    <alternativeName>
        <fullName>Lymphoid transcription factor LyF-1</fullName>
    </alternativeName>
</protein>
<reference key="1">
    <citation type="journal article" date="1992" name="Science">
        <title>Ikaros, an early lymphoid-specific transcription factor and a putative mediator for T cell commitment.</title>
        <authorList>
            <person name="Georgopoulos K."/>
            <person name="Moore D.D."/>
            <person name="Derfler B."/>
        </authorList>
    </citation>
    <scope>NUCLEOTIDE SEQUENCE [MRNA] (ISOFORM V)</scope>
    <scope>FUNCTION</scope>
    <scope>DEVELOPMENTAL STAGE</scope>
    <scope>TISSUE SPECIFICITY</scope>
    <source>
        <tissue>Embryo</tissue>
    </source>
</reference>
<reference key="2">
    <citation type="journal article" date="1994" name="Mol. Cell. Biol.">
        <title>The lymphoid transcription factor LyF-1 is encoded by specific, alternatively spliced mRNAs derived from the Ikaros gene.</title>
        <authorList>
            <person name="Hahm K."/>
            <person name="Ernst P."/>
            <person name="Lo K."/>
            <person name="Kim G.S."/>
            <person name="Turck C."/>
            <person name="Smale S.T."/>
        </authorList>
    </citation>
    <scope>NUCLEOTIDE SEQUENCE [MRNA]</scope>
    <scope>PARTIAL PROTEIN SEQUENCE</scope>
    <scope>ALTERNATIVE SPLICING</scope>
    <scope>TISSUE SPECIFICITY</scope>
</reference>
<reference key="3">
    <citation type="journal article" date="1997" name="EMBO J.">
        <title>Aiolos, a lymphoid restricted transcription factor that interacts with Ikaros to regulate lymphocyte differentiation.</title>
        <authorList>
            <person name="Morgan B."/>
            <person name="Sun L."/>
            <person name="Avitahl N."/>
            <person name="Andrikopoulos K."/>
            <person name="Ikeda T."/>
            <person name="Gonzales E."/>
            <person name="Wu P."/>
            <person name="Neben S."/>
            <person name="Georgopoulos K."/>
        </authorList>
    </citation>
    <scope>INTERACTION WITH IKZF3</scope>
</reference>
<reference key="4">
    <citation type="journal article" date="1999" name="J. Exp. Med.">
        <title>Defects in hemopoietic stem cell activity in Ikaros mutant mice.</title>
        <authorList>
            <person name="Nichogiannopoulou A."/>
            <person name="Trevisan M."/>
            <person name="Neben S."/>
            <person name="Friedrich C."/>
            <person name="Georgopoulos K."/>
        </authorList>
    </citation>
    <scope>DISRUPTION PHENOTYPE</scope>
</reference>
<reference key="5">
    <citation type="journal article" date="2000" name="Genes Dev.">
        <title>Targeting of Ikaros to pericentromeric heterochromatin by direct DNA binding.</title>
        <authorList>
            <person name="Cobb B.S."/>
            <person name="Morales-Alcelay S."/>
            <person name="Kleiger G."/>
            <person name="Brown K.E."/>
            <person name="Fisher A.G."/>
            <person name="Smale S.T."/>
        </authorList>
    </citation>
    <scope>DNA-BINDING</scope>
    <scope>SUBCELLULAR LOCATION</scope>
    <scope>MUTAGENESIS OF SER-152; PHE-153; THR-154; GLN-155; LYS-156; GLY-157; ASN-158; LEU-159; LEU-160; ARG-161; LYS-173; ASN-178; TYR-179; ALA-180; CYS-181; ARG-182; ARG-183; ARG-184; ASP-185; ALA-186; LEU-187; THR-188; GLY-189; LEU-191; ARG-192 AND THR-193</scope>
</reference>
<reference key="6">
    <citation type="journal article" date="2000" name="Mol. Cell. Biol.">
        <title>An ikaros-containing chromatin-remodeling complex in adult-type erythroid cells.</title>
        <authorList>
            <person name="O'Neill D.W."/>
            <person name="Schoetz S.S."/>
            <person name="Lopez R.A."/>
            <person name="Castle M."/>
            <person name="Rabinowitz L."/>
            <person name="Shor E."/>
            <person name="Krawchuk D."/>
            <person name="Goll M.G."/>
            <person name="Renz M."/>
            <person name="Seelig H.P."/>
            <person name="Han S."/>
            <person name="Seong R.H."/>
            <person name="Park S.D."/>
            <person name="Agalioti T."/>
            <person name="Munshi N."/>
            <person name="Thanos D."/>
            <person name="Erdjument-Bromage H."/>
            <person name="Tempst P."/>
            <person name="Bank A."/>
        </authorList>
    </citation>
    <scope>IDENTIFICATION IN THE NURD COMPLEX</scope>
    <scope>IDENTIFICATION IN THE BAF COMPLEX</scope>
    <scope>INTERACTION WITH CHD4</scope>
    <scope>FUNCTION</scope>
    <scope>IDENTIFICATION BY MASS SPECTROMETRY</scope>
</reference>
<reference key="7">
    <citation type="journal article" date="2002" name="Genes Dev.">
        <title>A common mechanism for mitotic inactivation of C2H2 zinc finger DNA-binding domains.</title>
        <authorList>
            <person name="Dovat S."/>
            <person name="Ronni T."/>
            <person name="Russell D."/>
            <person name="Ferrini R."/>
            <person name="Cobb B.S."/>
            <person name="Smale S.T."/>
        </authorList>
    </citation>
    <scope>PHOSPHORYLATION AT THR-140; SER-167 AND SER-195</scope>
    <scope>SUBCELLULAR LOCATION</scope>
    <scope>DNA-BINDING</scope>
    <scope>MUTAGENESIS OF THR-140; SER-167 AND SER-195</scope>
</reference>
<reference key="8">
    <citation type="journal article" date="2004" name="Mol. Cell. Biol.">
        <title>Phosphorylation controls Ikaros's ability to negatively regulate the G(1)-S transition.</title>
        <authorList>
            <person name="Gomez-del Arco P."/>
            <person name="Maki K."/>
            <person name="Georgopoulos K."/>
        </authorList>
    </citation>
    <scope>PHOSPHORYLATION AT SER-63; SER-384; SER-386; SER-388; SER-392 AND THR-393</scope>
    <scope>DNA-BINDING</scope>
    <scope>FUNCTION</scope>
    <scope>MUTAGENESIS OF SER-63; SER-384; SER-386; SER-388; SER-392 AND THR-393</scope>
</reference>
<reference key="9">
    <citation type="journal article" date="2005" name="Mol. Cell. Biol.">
        <title>Ikaros SUMOylation: switching out of repression.</title>
        <authorList>
            <person name="Gomez-del Arco P."/>
            <person name="Koipally J."/>
            <person name="Georgopoulos K."/>
        </authorList>
    </citation>
    <scope>SUMOYLATION AT LYS-58 AND LYS-239</scope>
    <scope>INTERACTION WITH SUMO1; PIAS2; PIAS3 AND SMARCA4</scope>
    <scope>FUNCTION</scope>
    <scope>MUTAGENESIS OF LYS-58; LYS-239; LYS-424 AND LYS-458</scope>
</reference>
<reference key="10">
    <citation type="journal article" date="2006" name="Am. J. Hematol.">
        <title>Ikaros increases normal apoptosis in adult erythroid cells.</title>
        <authorList>
            <person name="Pulte D."/>
            <person name="Lopez R.A."/>
            <person name="Baker S.T."/>
            <person name="Ward M."/>
            <person name="Ritchie E."/>
            <person name="Richardson C.A."/>
            <person name="O'Neill D.W."/>
            <person name="Bank A."/>
        </authorList>
    </citation>
    <scope>FUNCTION</scope>
</reference>
<reference key="11">
    <citation type="journal article" date="2008" name="Neuron">
        <title>Ikaros confers early temporal competence to mouse retinal progenitor cells.</title>
        <authorList>
            <person name="Elliott J."/>
            <person name="Jolicoeur C."/>
            <person name="Ramamurthy V."/>
            <person name="Cayouette M."/>
        </authorList>
    </citation>
    <scope>FUNCTION</scope>
    <scope>TISSUE SPECIFICITY</scope>
</reference>
<reference key="12">
    <citation type="journal article" date="2008" name="J. Biol. Chem.">
        <title>Recruitment of ikaros to pericentromeric heterochromatin is regulated by phosphorylation.</title>
        <authorList>
            <person name="Gurel Z."/>
            <person name="Ronni T."/>
            <person name="Ho S."/>
            <person name="Kuchar J."/>
            <person name="Payne K.J."/>
            <person name="Turk C.W."/>
            <person name="Dovat S."/>
        </authorList>
    </citation>
    <scope>PHOSPHORYLATION AT SER-13; THR-23; SER-63; SER-101 AND SER-293</scope>
    <scope>FUNCTION</scope>
    <scope>SUBCELLULAR LOCATION</scope>
    <scope>DNA-BINDING</scope>
    <scope>IDENTIFICATION BY MASS SPECTROMETRY</scope>
    <scope>MUTAGENESIS OF SER-13; THR-23; SER-63; SER-101 AND SER-293</scope>
</reference>
<reference key="13">
    <citation type="journal article" date="2009" name="J. Biol. Chem.">
        <title>Ikaros stability and pericentromeric localization are regulated by protein phosphatase 1.</title>
        <authorList>
            <person name="Popescu M."/>
            <person name="Gurel Z."/>
            <person name="Ronni T."/>
            <person name="Song C."/>
            <person name="Hung K.Y."/>
            <person name="Payne K.J."/>
            <person name="Dovat S."/>
        </authorList>
    </citation>
    <scope>INTERACTION WITH PPP1CC</scope>
    <scope>PHOSPHORYLATION</scope>
    <scope>SUBCELLULAR LOCATION</scope>
    <scope>UBIQUITINATION</scope>
    <scope>MUTAGENESIS OF 465-LEU--LEU-467</scope>
</reference>
<reference key="14">
    <citation type="journal article" date="2010" name="Cell">
        <title>A tissue-specific atlas of mouse protein phosphorylation and expression.</title>
        <authorList>
            <person name="Huttlin E.L."/>
            <person name="Jedrychowski M.P."/>
            <person name="Elias J.E."/>
            <person name="Goswami T."/>
            <person name="Rad R."/>
            <person name="Beausoleil S.A."/>
            <person name="Villen J."/>
            <person name="Haas W."/>
            <person name="Sowa M.E."/>
            <person name="Gygi S.P."/>
        </authorList>
    </citation>
    <scope>PHOSPHORYLATION [LARGE SCALE ANALYSIS] AT SER-63; SER-397 AND SER-440</scope>
    <scope>IDENTIFICATION BY MASS SPECTROMETRY [LARGE SCALE ANALYSIS]</scope>
    <source>
        <tissue>Lung</tissue>
        <tissue>Spleen</tissue>
    </source>
</reference>
<dbReference type="EMBL" id="L03547">
    <property type="protein sequence ID" value="AAA66193.1"/>
    <property type="molecule type" value="mRNA"/>
</dbReference>
<dbReference type="EMBL" id="S74517">
    <property type="protein sequence ID" value="AAB32248.2"/>
    <property type="status" value="ALT_SEQ"/>
    <property type="molecule type" value="mRNA"/>
</dbReference>
<dbReference type="EMBL" id="S74518">
    <property type="protein sequence ID" value="AAB32249.2"/>
    <property type="molecule type" value="mRNA"/>
</dbReference>
<dbReference type="EMBL" id="S74708">
    <property type="protein sequence ID" value="AAB32250.2"/>
    <property type="molecule type" value="mRNA"/>
</dbReference>
<dbReference type="PIR" id="A56355">
    <property type="entry name" value="A56355"/>
</dbReference>
<dbReference type="PIR" id="I59572">
    <property type="entry name" value="I59572"/>
</dbReference>
<dbReference type="SMR" id="Q03267"/>
<dbReference type="CORUM" id="Q03267"/>
<dbReference type="FunCoup" id="Q03267">
    <property type="interactions" value="825"/>
</dbReference>
<dbReference type="IntAct" id="Q03267">
    <property type="interactions" value="11"/>
</dbReference>
<dbReference type="STRING" id="10090.ENSMUSP00000075992"/>
<dbReference type="iPTMnet" id="Q03267"/>
<dbReference type="PhosphoSitePlus" id="Q03267"/>
<dbReference type="SwissPalm" id="Q03267"/>
<dbReference type="jPOST" id="Q03267"/>
<dbReference type="PeptideAtlas" id="Q03267"/>
<dbReference type="ProteomicsDB" id="267308">
    <molecule id="Q03267-1"/>
</dbReference>
<dbReference type="ProteomicsDB" id="267309">
    <molecule id="Q03267-2"/>
</dbReference>
<dbReference type="ProteomicsDB" id="267310">
    <molecule id="Q03267-3"/>
</dbReference>
<dbReference type="ProteomicsDB" id="267311">
    <molecule id="Q03267-4"/>
</dbReference>
<dbReference type="ProteomicsDB" id="267312">
    <molecule id="Q03267-5"/>
</dbReference>
<dbReference type="ProteomicsDB" id="267313">
    <molecule id="Q03267-6"/>
</dbReference>
<dbReference type="AGR" id="MGI:1342540"/>
<dbReference type="MGI" id="MGI:1342540">
    <property type="gene designation" value="Ikzf1"/>
</dbReference>
<dbReference type="eggNOG" id="KOG1721">
    <property type="taxonomic scope" value="Eukaryota"/>
</dbReference>
<dbReference type="InParanoid" id="Q03267"/>
<dbReference type="ChiTaRS" id="Ikzf1">
    <property type="organism name" value="mouse"/>
</dbReference>
<dbReference type="PRO" id="PR:Q03267"/>
<dbReference type="Proteomes" id="UP000000589">
    <property type="component" value="Unplaced"/>
</dbReference>
<dbReference type="RNAct" id="Q03267">
    <property type="molecule type" value="protein"/>
</dbReference>
<dbReference type="GO" id="GO:0005737">
    <property type="term" value="C:cytoplasm"/>
    <property type="evidence" value="ECO:0007669"/>
    <property type="project" value="UniProtKB-SubCell"/>
</dbReference>
<dbReference type="GO" id="GO:0005654">
    <property type="term" value="C:nucleoplasm"/>
    <property type="evidence" value="ECO:0000304"/>
    <property type="project" value="Reactome"/>
</dbReference>
<dbReference type="GO" id="GO:0005634">
    <property type="term" value="C:nucleus"/>
    <property type="evidence" value="ECO:0000314"/>
    <property type="project" value="MGI"/>
</dbReference>
<dbReference type="GO" id="GO:0005721">
    <property type="term" value="C:pericentric heterochromatin"/>
    <property type="evidence" value="ECO:0000314"/>
    <property type="project" value="MGI"/>
</dbReference>
<dbReference type="GO" id="GO:0032991">
    <property type="term" value="C:protein-containing complex"/>
    <property type="evidence" value="ECO:0000266"/>
    <property type="project" value="MGI"/>
</dbReference>
<dbReference type="GO" id="GO:0032993">
    <property type="term" value="C:protein-DNA complex"/>
    <property type="evidence" value="ECO:0000314"/>
    <property type="project" value="MGI"/>
</dbReference>
<dbReference type="GO" id="GO:0005667">
    <property type="term" value="C:transcription regulator complex"/>
    <property type="evidence" value="ECO:0000304"/>
    <property type="project" value="MGI"/>
</dbReference>
<dbReference type="GO" id="GO:0003677">
    <property type="term" value="F:DNA binding"/>
    <property type="evidence" value="ECO:0000314"/>
    <property type="project" value="MGI"/>
</dbReference>
<dbReference type="GO" id="GO:0003700">
    <property type="term" value="F:DNA-binding transcription factor activity"/>
    <property type="evidence" value="ECO:0000314"/>
    <property type="project" value="MGI"/>
</dbReference>
<dbReference type="GO" id="GO:0008187">
    <property type="term" value="F:poly-pyrimidine tract binding"/>
    <property type="evidence" value="ECO:0000314"/>
    <property type="project" value="MGI"/>
</dbReference>
<dbReference type="GO" id="GO:0000978">
    <property type="term" value="F:RNA polymerase II cis-regulatory region sequence-specific DNA binding"/>
    <property type="evidence" value="ECO:0000314"/>
    <property type="project" value="MGI"/>
</dbReference>
<dbReference type="GO" id="GO:0043565">
    <property type="term" value="F:sequence-specific DNA binding"/>
    <property type="evidence" value="ECO:0000315"/>
    <property type="project" value="MGI"/>
</dbReference>
<dbReference type="GO" id="GO:0000976">
    <property type="term" value="F:transcription cis-regulatory region binding"/>
    <property type="evidence" value="ECO:0000314"/>
    <property type="project" value="UniProtKB"/>
</dbReference>
<dbReference type="GO" id="GO:0008270">
    <property type="term" value="F:zinc ion binding"/>
    <property type="evidence" value="ECO:0007669"/>
    <property type="project" value="UniProtKB-KW"/>
</dbReference>
<dbReference type="GO" id="GO:0035881">
    <property type="term" value="P:amacrine cell differentiation"/>
    <property type="evidence" value="ECO:0000314"/>
    <property type="project" value="MGI"/>
</dbReference>
<dbReference type="GO" id="GO:0030183">
    <property type="term" value="P:B cell differentiation"/>
    <property type="evidence" value="ECO:0000315"/>
    <property type="project" value="MGI"/>
</dbReference>
<dbReference type="GO" id="GO:0006325">
    <property type="term" value="P:chromatin organization"/>
    <property type="evidence" value="ECO:0007669"/>
    <property type="project" value="UniProtKB-KW"/>
</dbReference>
<dbReference type="GO" id="GO:0030218">
    <property type="term" value="P:erythrocyte differentiation"/>
    <property type="evidence" value="ECO:0000250"/>
    <property type="project" value="UniProtKB"/>
</dbReference>
<dbReference type="GO" id="GO:0045184">
    <property type="term" value="P:establishment of protein localization"/>
    <property type="evidence" value="ECO:0000315"/>
    <property type="project" value="MGI"/>
</dbReference>
<dbReference type="GO" id="GO:0030900">
    <property type="term" value="P:forebrain development"/>
    <property type="evidence" value="ECO:0000315"/>
    <property type="project" value="MGI"/>
</dbReference>
<dbReference type="GO" id="GO:0048732">
    <property type="term" value="P:gland development"/>
    <property type="evidence" value="ECO:0000315"/>
    <property type="project" value="MGI"/>
</dbReference>
<dbReference type="GO" id="GO:0030097">
    <property type="term" value="P:hemopoiesis"/>
    <property type="evidence" value="ECO:0000315"/>
    <property type="project" value="MGI"/>
</dbReference>
<dbReference type="GO" id="GO:0048535">
    <property type="term" value="P:lymph node development"/>
    <property type="evidence" value="ECO:0000315"/>
    <property type="project" value="MGI"/>
</dbReference>
<dbReference type="GO" id="GO:0030098">
    <property type="term" value="P:lymphocyte differentiation"/>
    <property type="evidence" value="ECO:0000250"/>
    <property type="project" value="UniProtKB"/>
</dbReference>
<dbReference type="GO" id="GO:0001779">
    <property type="term" value="P:natural killer cell differentiation"/>
    <property type="evidence" value="ECO:0000315"/>
    <property type="project" value="MGI"/>
</dbReference>
<dbReference type="GO" id="GO:0045892">
    <property type="term" value="P:negative regulation of DNA-templated transcription"/>
    <property type="evidence" value="ECO:0000314"/>
    <property type="project" value="UniProtKB"/>
</dbReference>
<dbReference type="GO" id="GO:0000122">
    <property type="term" value="P:negative regulation of transcription by RNA polymerase II"/>
    <property type="evidence" value="ECO:0000314"/>
    <property type="project" value="MGI"/>
</dbReference>
<dbReference type="GO" id="GO:0048541">
    <property type="term" value="P:Peyer's patch development"/>
    <property type="evidence" value="ECO:0000315"/>
    <property type="project" value="MGI"/>
</dbReference>
<dbReference type="GO" id="GO:0045893">
    <property type="term" value="P:positive regulation of DNA-templated transcription"/>
    <property type="evidence" value="ECO:0000314"/>
    <property type="project" value="MGI"/>
</dbReference>
<dbReference type="GO" id="GO:0010628">
    <property type="term" value="P:positive regulation of gene expression"/>
    <property type="evidence" value="ECO:0000315"/>
    <property type="project" value="MGI"/>
</dbReference>
<dbReference type="GO" id="GO:0040018">
    <property type="term" value="P:positive regulation of multicellular organism growth"/>
    <property type="evidence" value="ECO:0000315"/>
    <property type="project" value="MGI"/>
</dbReference>
<dbReference type="GO" id="GO:0045660">
    <property type="term" value="P:positive regulation of neutrophil differentiation"/>
    <property type="evidence" value="ECO:0000315"/>
    <property type="project" value="MGI"/>
</dbReference>
<dbReference type="GO" id="GO:0051138">
    <property type="term" value="P:positive regulation of NK T cell differentiation"/>
    <property type="evidence" value="ECO:0000315"/>
    <property type="project" value="MGI"/>
</dbReference>
<dbReference type="GO" id="GO:0045899">
    <property type="term" value="P:positive regulation of RNA polymerase II transcription preinitiation complex assembly"/>
    <property type="evidence" value="ECO:0000315"/>
    <property type="project" value="MGI"/>
</dbReference>
<dbReference type="GO" id="GO:0045944">
    <property type="term" value="P:positive regulation of transcription by RNA polymerase II"/>
    <property type="evidence" value="ECO:0000314"/>
    <property type="project" value="MGI"/>
</dbReference>
<dbReference type="GO" id="GO:0032968">
    <property type="term" value="P:positive regulation of transcription elongation by RNA polymerase II"/>
    <property type="evidence" value="ECO:0000315"/>
    <property type="project" value="MGI"/>
</dbReference>
<dbReference type="GO" id="GO:0006355">
    <property type="term" value="P:regulation of DNA-templated transcription"/>
    <property type="evidence" value="ECO:0000315"/>
    <property type="project" value="MGI"/>
</dbReference>
<dbReference type="GO" id="GO:0006357">
    <property type="term" value="P:regulation of transcription by RNA polymerase II"/>
    <property type="evidence" value="ECO:0000315"/>
    <property type="project" value="MGI"/>
</dbReference>
<dbReference type="GO" id="GO:0060041">
    <property type="term" value="P:retina development in camera-type eye"/>
    <property type="evidence" value="ECO:0000315"/>
    <property type="project" value="MGI"/>
</dbReference>
<dbReference type="GO" id="GO:0060040">
    <property type="term" value="P:retinal bipolar neuron differentiation"/>
    <property type="evidence" value="ECO:0000314"/>
    <property type="project" value="MGI"/>
</dbReference>
<dbReference type="GO" id="GO:0030217">
    <property type="term" value="P:T cell differentiation"/>
    <property type="evidence" value="ECO:0000315"/>
    <property type="project" value="MGI"/>
</dbReference>
<dbReference type="GO" id="GO:0048538">
    <property type="term" value="P:thymus development"/>
    <property type="evidence" value="ECO:0000315"/>
    <property type="project" value="MGI"/>
</dbReference>
<dbReference type="FunFam" id="3.30.160.60:FF:000073">
    <property type="entry name" value="IKAROS family zinc finger 1"/>
    <property type="match status" value="1"/>
</dbReference>
<dbReference type="FunFam" id="3.30.160.60:FF:000265">
    <property type="entry name" value="IKAROS family zinc finger 1"/>
    <property type="match status" value="1"/>
</dbReference>
<dbReference type="FunFam" id="3.30.160.60:FF:000525">
    <property type="entry name" value="IKAROS family zinc finger 1"/>
    <property type="match status" value="1"/>
</dbReference>
<dbReference type="FunFam" id="3.30.160.60:FF:000124">
    <property type="entry name" value="IKAROS family zinc finger 4"/>
    <property type="match status" value="1"/>
</dbReference>
<dbReference type="FunFam" id="3.30.160.60:FF:000168">
    <property type="entry name" value="zinc finger protein Eos isoform X1"/>
    <property type="match status" value="1"/>
</dbReference>
<dbReference type="Gene3D" id="3.30.160.60">
    <property type="entry name" value="Classic Zinc Finger"/>
    <property type="match status" value="3"/>
</dbReference>
<dbReference type="InterPro" id="IPR050589">
    <property type="entry name" value="Ikaros_C2H2-ZF"/>
</dbReference>
<dbReference type="InterPro" id="IPR036236">
    <property type="entry name" value="Znf_C2H2_sf"/>
</dbReference>
<dbReference type="InterPro" id="IPR013087">
    <property type="entry name" value="Znf_C2H2_type"/>
</dbReference>
<dbReference type="PANTHER" id="PTHR24404:SF36">
    <property type="entry name" value="DNA-BINDING PROTEIN IKAROS"/>
    <property type="match status" value="1"/>
</dbReference>
<dbReference type="PANTHER" id="PTHR24404">
    <property type="entry name" value="ZINC FINGER PROTEIN"/>
    <property type="match status" value="1"/>
</dbReference>
<dbReference type="Pfam" id="PF00096">
    <property type="entry name" value="zf-C2H2"/>
    <property type="match status" value="3"/>
</dbReference>
<dbReference type="SMART" id="SM00355">
    <property type="entry name" value="ZnF_C2H2"/>
    <property type="match status" value="6"/>
</dbReference>
<dbReference type="SUPFAM" id="SSF57667">
    <property type="entry name" value="beta-beta-alpha zinc fingers"/>
    <property type="match status" value="3"/>
</dbReference>
<dbReference type="PROSITE" id="PS00028">
    <property type="entry name" value="ZINC_FINGER_C2H2_1"/>
    <property type="match status" value="5"/>
</dbReference>
<dbReference type="PROSITE" id="PS50157">
    <property type="entry name" value="ZINC_FINGER_C2H2_2"/>
    <property type="match status" value="3"/>
</dbReference>
<sequence>MDVDEGQDMSQVSGKESPPVSDTPDEGDEPMPVPEDLSTTSGAQQNSKSDRGMGSNVKVETQSDEENGRACEMNGEECAEDLRMLDASGEKMNGSHRDQGSSALSGVGGIRLPNGKLKCDICGIVCIGPNVLMVHKRSHTERPFQCNQCGASFTQKGNLLRHIKLHSGEKPFKCHLCNYACRRRDALTGHLRTHSVGKPHKCGYCGRSYKQRSSLEEHKERCHNYLESMGLPGVCPVIKEETNHNEMAEDLCKIGAERSLVLDRLASNVAKRKSSMPQKFLGDKCLSDMPYDSANYEKEDMMTSHVMDQAINNAINYLGAESLRPLVQTPPGSSEVVPVISSMYQLHKPPSDGPPRSNHSAQDAVDNLLLLSKAKSVSSEREASPSNSCQDSTDTESNAEEQRSGLIYLTNHINPHARNGLALKEEQRAYEVLRAASENSQDAFRVVSTSGEQLKVYKCEHCRVLFLDHVMYTIHMGCHGCHGFRDPFECNMCGYHSQDRYEFSSHITRGEHRYHLS</sequence>
<comment type="function">
    <text evidence="2 7 9 10 11 12 13 14">Transcription regulator of hematopoietic cell differentiation. Binds gamma-satellite DNA. Binds with higher affinity to gamma satellite A. Plays a role in the development of lymphocytes, B- and T-cells. Binds and activates the enhancer (delta-A element) of the CD3-delta gene. Repressor of the TDT (terminal deoxynucleotidyltransferase) gene during thymocyte differentiation. Regulates transcription through association with both HDAC-dependent and HDAC-independent complexes. Targets the 2 chromatin-remodeling complexes, NuRD and BAF (SWI/SNF), in a single complex (PYR complex), to the beta-globin locus in adult erythrocytes. Increases normal apoptosis in adult erythroid cells (By similarity). Confers early temporal competence to retinal progenitor cells (RPCs). Function is isoform-specific and is modulated by dominant-negative inactive isoforms (By similarity).</text>
</comment>
<comment type="subunit">
    <text evidence="2 7 11 15 17">Heterodimer with other IKAROS family members. Interacts with IKZF4 and IKZF5 (By similarity). Component of the chromatin-remodeling NuRD repressor complex which includes at least HDAC1, HDAC2, RBBP4, RBBP7, IKZF1, MTA2, MBD2, MBD3, MTA1L1, CHD3 and CHD4. Interacts directly with the CHD4 component of the NuRD complex. Interacts directly with SMARCA4; the interaction associates IKFZ1 with the BAF complex. Interacts with SUMO1; the interaction sumoylates IKAROS, promoted by PIAS2 and PIAS3. Interacts with PIAS2 (isoform alpha); the interaction promotes sumoylation and reduces transcription repression. Interacts, to a lesser extent, with PIAS3. Interacts with PPP1CC; the interaction targets PPP1CC to pericentromeric heterochromatin, dephosphorylates IKAROS, stabilizes it and prevents it from degradation. Interacts with IKZF3.</text>
</comment>
<comment type="interaction">
    <interactant intactId="EBI-908572">
        <id>Q03267</id>
    </interactant>
    <interactant intactId="EBI-80152">
        <id>P63166</id>
        <label>Sumo1</label>
    </interactant>
    <organismsDiffer>false</organismsDiffer>
    <experiments>2</experiments>
</comment>
<comment type="subcellular location">
    <subcellularLocation>
        <location evidence="6 8 13 15">Nucleus</location>
    </subcellularLocation>
    <text>In resting lymphocytes, distributed diffusely throughout the nucleus. Localizes to pericentromeric heterochromatin in proliferating cells. This localization requires DNA binding which is regulated by phosphorylation / dephosphorylation events.</text>
</comment>
<comment type="subcellular location">
    <molecule>Isoform V</molecule>
    <subcellularLocation>
        <location>Nucleus</location>
    </subcellularLocation>
    <text>In resting lymphocytes, distributed diffusely throughout the nucleus. Localizes to pericentromeric heterochromatin in proliferating cells. This localization requires DNA binding which is regulated by phosphorylation / dephosphorylation events.</text>
</comment>
<comment type="subcellular location">
    <molecule>Isoform I</molecule>
    <subcellularLocation>
        <location>Cytoplasm</location>
    </subcellularLocation>
</comment>
<comment type="alternative products">
    <event type="alternative splicing"/>
    <isoform>
        <id>Q03267-1</id>
        <name>VI</name>
        <sequence type="displayed"/>
    </isoform>
    <isoform>
        <id>Q03267-2</id>
        <name>I</name>
        <sequence type="described" ref="VSP_006855"/>
    </isoform>
    <isoform>
        <id>Q03267-3</id>
        <name>II</name>
        <sequence type="described" ref="VSP_006853 VSP_006855"/>
    </isoform>
    <isoform>
        <id>Q03267-4</id>
        <name>III</name>
        <sequence type="described" ref="VSP_006856"/>
    </isoform>
    <isoform>
        <id>Q03267-5</id>
        <name>IV</name>
        <sequence type="described" ref="VSP_006853 VSP_006856"/>
    </isoform>
    <isoform>
        <id>Q03267-6</id>
        <name>V</name>
        <sequence type="described" ref="VSP_006854"/>
    </isoform>
</comment>
<comment type="tissue specificity">
    <text evidence="9 14 16">Strongly expressed in T-cells and their progenitors,in B-cells, and in all early embryonic retinal progenitor cells (RPCs). Isoforms V and VI are the predominant isoforms in lymphocytes.</text>
</comment>
<comment type="developmental stage">
    <text evidence="9">First detected in fetal liver and embryonic thymus.</text>
</comment>
<comment type="domain">
    <text>The N-terminal zinc-fingers 2 and 3 are required for DNA binding as well as for targeting IKFZ1 to pericentromeric heterochromatin.</text>
</comment>
<comment type="domain">
    <text>The C-terminal zinc-finger domain is required for dimerization.</text>
</comment>
<comment type="PTM">
    <text evidence="1 8 10 13 15">Phosphorylation at Ser-357 and Ser-360 downstream of SYK induces nuclear translocation (By similarity). Phosphorylation controls cell-cycle progression from late G(1) stage to S stage. Hyperphosphorylated during G2/M phase. Dephosphorylated state during late G(1) phase. Phosphorylation on Thr-140 is required for DNA and pericentromeric location during mitosis. CK2 is the main kinase, in vitro. GSK3 and CDK may also contribute to phosphorylation of the C-terminal serine and threonine residues. Phosphorylation on these C-terminal residues reduces the DNA-binding ability. Phosphorylation/dephosphorylation events on Ser-13 and Ser-293 regulate TDT expression during thymocyte differentiation. Dephosphorylation by protein phosphatase 1 regulates stability and pericentromeric heterochromatin location. Phosphorylated in both lymphoid and non-lymphoid tissues.</text>
</comment>
<comment type="PTM">
    <text evidence="11">Sumoylated. Simultaneous sumoylation on the 2 sites results in a loss of both HDAC-dependent and HDAC-independent repression. Has no effect on pericentromeric heterochromatin location. Desumoylated by SENP1.</text>
</comment>
<comment type="PTM">
    <text evidence="15">Polyubiquitinated.</text>
</comment>
<comment type="disruption phenotype">
    <text evidence="5">Defects in hemopoietic stem cell activity. Progressive reduction in multipotent CFU-S(14) (colony-forming unit-spleen) progenitors and the earliest erythroid-restricted precursors (BFU-E).</text>
</comment>
<comment type="similarity">
    <text evidence="19">Belongs to the Ikaros C2H2-type zinc-finger protein family.</text>
</comment>
<name>IKZF1_MOUSE</name>
<keyword id="KW-0010">Activator</keyword>
<keyword id="KW-0025">Alternative splicing</keyword>
<keyword id="KW-0131">Cell cycle</keyword>
<keyword id="KW-0156">Chromatin regulator</keyword>
<keyword id="KW-0963">Cytoplasm</keyword>
<keyword id="KW-0217">Developmental protein</keyword>
<keyword id="KW-0903">Direct protein sequencing</keyword>
<keyword id="KW-0238">DNA-binding</keyword>
<keyword id="KW-1017">Isopeptide bond</keyword>
<keyword id="KW-0479">Metal-binding</keyword>
<keyword id="KW-0539">Nucleus</keyword>
<keyword id="KW-0597">Phosphoprotein</keyword>
<keyword id="KW-1185">Reference proteome</keyword>
<keyword id="KW-0677">Repeat</keyword>
<keyword id="KW-0678">Repressor</keyword>
<keyword id="KW-0804">Transcription</keyword>
<keyword id="KW-0805">Transcription regulation</keyword>
<keyword id="KW-0832">Ubl conjugation</keyword>
<keyword id="KW-0862">Zinc</keyword>
<keyword id="KW-0863">Zinc-finger</keyword>
<proteinExistence type="evidence at protein level"/>
<evidence type="ECO:0000250" key="1"/>
<evidence type="ECO:0000250" key="2">
    <source>
        <dbReference type="UniProtKB" id="Q13422"/>
    </source>
</evidence>
<evidence type="ECO:0000255" key="3">
    <source>
        <dbReference type="PROSITE-ProRule" id="PRU00042"/>
    </source>
</evidence>
<evidence type="ECO:0000256" key="4">
    <source>
        <dbReference type="SAM" id="MobiDB-lite"/>
    </source>
</evidence>
<evidence type="ECO:0000269" key="5">
    <source>
    </source>
</evidence>
<evidence type="ECO:0000269" key="6">
    <source>
    </source>
</evidence>
<evidence type="ECO:0000269" key="7">
    <source>
    </source>
</evidence>
<evidence type="ECO:0000269" key="8">
    <source>
    </source>
</evidence>
<evidence type="ECO:0000269" key="9">
    <source>
    </source>
</evidence>
<evidence type="ECO:0000269" key="10">
    <source>
    </source>
</evidence>
<evidence type="ECO:0000269" key="11">
    <source>
    </source>
</evidence>
<evidence type="ECO:0000269" key="12">
    <source>
    </source>
</evidence>
<evidence type="ECO:0000269" key="13">
    <source>
    </source>
</evidence>
<evidence type="ECO:0000269" key="14">
    <source>
    </source>
</evidence>
<evidence type="ECO:0000269" key="15">
    <source>
    </source>
</evidence>
<evidence type="ECO:0000269" key="16">
    <source>
    </source>
</evidence>
<evidence type="ECO:0000269" key="17">
    <source>
    </source>
</evidence>
<evidence type="ECO:0000303" key="18">
    <source>
    </source>
</evidence>
<evidence type="ECO:0000305" key="19"/>
<evidence type="ECO:0007744" key="20">
    <source>
    </source>
</evidence>
<gene>
    <name type="primary">Ikzf1</name>
    <name type="synonym">Ikaros</name>
    <name type="synonym">Lyf1</name>
    <name type="synonym">Zfpn1a1</name>
    <name type="synonym">Znfn1a1</name>
</gene>